<comment type="subcellular location">
    <subcellularLocation>
        <location evidence="2">Membrane</location>
        <topology evidence="2">Single-pass membrane protein</topology>
    </subcellularLocation>
</comment>
<comment type="similarity">
    <text evidence="2">Belongs to the reprimo family.</text>
</comment>
<accession>A5PLA0</accession>
<organism>
    <name type="scientific">Danio rerio</name>
    <name type="common">Zebrafish</name>
    <name type="synonym">Brachydanio rerio</name>
    <dbReference type="NCBI Taxonomy" id="7955"/>
    <lineage>
        <taxon>Eukaryota</taxon>
        <taxon>Metazoa</taxon>
        <taxon>Chordata</taxon>
        <taxon>Craniata</taxon>
        <taxon>Vertebrata</taxon>
        <taxon>Euteleostomi</taxon>
        <taxon>Actinopterygii</taxon>
        <taxon>Neopterygii</taxon>
        <taxon>Teleostei</taxon>
        <taxon>Ostariophysi</taxon>
        <taxon>Cypriniformes</taxon>
        <taxon>Danionidae</taxon>
        <taxon>Danioninae</taxon>
        <taxon>Danio</taxon>
    </lineage>
</organism>
<name>RPRML_DANRE</name>
<keyword id="KW-0472">Membrane</keyword>
<keyword id="KW-1185">Reference proteome</keyword>
<keyword id="KW-0812">Transmembrane</keyword>
<keyword id="KW-1133">Transmembrane helix</keyword>
<reference key="1">
    <citation type="submission" date="2007-06" db="EMBL/GenBank/DDBJ databases">
        <authorList>
            <consortium name="NIH - Zebrafish Gene Collection (ZGC) project"/>
        </authorList>
    </citation>
    <scope>NUCLEOTIDE SEQUENCE [LARGE SCALE MRNA]</scope>
    <source>
        <tissue>Brain</tissue>
    </source>
</reference>
<protein>
    <recommendedName>
        <fullName>Reprimo-like protein</fullName>
    </recommendedName>
</protein>
<proteinExistence type="inferred from homology"/>
<sequence>MNGTFFNHTVFTHGVLLNRSQELAGTLVDCCTGNGSEVTANDGGGSLVLAQDERKLFVTRVVQIAVLCVLSLTVMFGIFFLGCNLMIKSESMINFLVKDRRSSKDVEAVMIGLS</sequence>
<feature type="chain" id="PRO_0000312758" description="Reprimo-like protein">
    <location>
        <begin position="1"/>
        <end position="114"/>
    </location>
</feature>
<feature type="transmembrane region" description="Helical" evidence="1">
    <location>
        <begin position="61"/>
        <end position="81"/>
    </location>
</feature>
<dbReference type="EMBL" id="BC142802">
    <property type="protein sequence ID" value="AAI42803.1"/>
    <property type="molecule type" value="mRNA"/>
</dbReference>
<dbReference type="RefSeq" id="NP_001092241.1">
    <property type="nucleotide sequence ID" value="NM_001098771.1"/>
</dbReference>
<dbReference type="SMR" id="A5PLA0"/>
<dbReference type="FunCoup" id="A5PLA0">
    <property type="interactions" value="628"/>
</dbReference>
<dbReference type="STRING" id="7955.ENSDARP00000073775"/>
<dbReference type="PaxDb" id="7955-ENSDARP00000073775"/>
<dbReference type="GeneID" id="100073335"/>
<dbReference type="KEGG" id="dre:100073335"/>
<dbReference type="AGR" id="ZFIN:ZDB-GENE-070615-20"/>
<dbReference type="CTD" id="388394"/>
<dbReference type="ZFIN" id="ZDB-GENE-070615-20">
    <property type="gene designation" value="rprml"/>
</dbReference>
<dbReference type="eggNOG" id="ENOG502S6BR">
    <property type="taxonomic scope" value="Eukaryota"/>
</dbReference>
<dbReference type="InParanoid" id="A5PLA0"/>
<dbReference type="OrthoDB" id="9828700at2759"/>
<dbReference type="PhylomeDB" id="A5PLA0"/>
<dbReference type="PRO" id="PR:A5PLA0"/>
<dbReference type="Proteomes" id="UP000000437">
    <property type="component" value="Alternate scaffold 3"/>
</dbReference>
<dbReference type="Proteomes" id="UP000000437">
    <property type="component" value="Chromosome 3"/>
</dbReference>
<dbReference type="GO" id="GO:0016020">
    <property type="term" value="C:membrane"/>
    <property type="evidence" value="ECO:0007669"/>
    <property type="project" value="UniProtKB-SubCell"/>
</dbReference>
<dbReference type="InterPro" id="IPR043383">
    <property type="entry name" value="Reprimo_fam"/>
</dbReference>
<dbReference type="PANTHER" id="PTHR28649">
    <property type="entry name" value="PROTEIN REPRIMO-RELATED"/>
    <property type="match status" value="1"/>
</dbReference>
<dbReference type="PANTHER" id="PTHR28649:SF3">
    <property type="entry name" value="REPRIMO-LIKE PROTEIN"/>
    <property type="match status" value="1"/>
</dbReference>
<evidence type="ECO:0000255" key="1"/>
<evidence type="ECO:0000305" key="2"/>
<gene>
    <name type="primary">rprml</name>
    <name type="ORF">zgc:165459</name>
</gene>